<evidence type="ECO:0000250" key="1">
    <source>
        <dbReference type="UniProtKB" id="O43488"/>
    </source>
</evidence>
<evidence type="ECO:0000250" key="2">
    <source>
        <dbReference type="UniProtKB" id="Q8CG76"/>
    </source>
</evidence>
<evidence type="ECO:0000269" key="3">
    <source>
    </source>
</evidence>
<evidence type="ECO:0000269" key="4">
    <source>
    </source>
</evidence>
<evidence type="ECO:0000269" key="5">
    <source>
    </source>
</evidence>
<evidence type="ECO:0000269" key="6">
    <source>
    </source>
</evidence>
<evidence type="ECO:0000303" key="7">
    <source>
    </source>
</evidence>
<evidence type="ECO:0000305" key="8"/>
<evidence type="ECO:0000312" key="9">
    <source>
        <dbReference type="EMBL" id="AAO06971.1"/>
    </source>
</evidence>
<evidence type="ECO:0000312" key="10">
    <source>
        <dbReference type="EMBL" id="ABF94849.1"/>
    </source>
</evidence>
<evidence type="ECO:0000312" key="11">
    <source>
        <dbReference type="EMBL" id="BAF11407.1"/>
    </source>
</evidence>
<keyword id="KW-0408">Iron</keyword>
<keyword id="KW-0521">NADP</keyword>
<keyword id="KW-0560">Oxidoreductase</keyword>
<keyword id="KW-1185">Reference proteome</keyword>
<protein>
    <recommendedName>
        <fullName evidence="7">Deoxymugineic acid synthase 1</fullName>
        <shortName evidence="7">OsDMAS1</shortName>
        <ecNumber evidence="3">1.1.1.285</ecNumber>
    </recommendedName>
</protein>
<dbReference type="EC" id="1.1.1.285" evidence="3"/>
<dbReference type="EMBL" id="AB269906">
    <property type="protein sequence ID" value="BAF03161.1"/>
    <property type="molecule type" value="mRNA"/>
</dbReference>
<dbReference type="EMBL" id="AC134229">
    <property type="protein sequence ID" value="AAO06971.1"/>
    <property type="status" value="ALT_SEQ"/>
    <property type="molecule type" value="Genomic_DNA"/>
</dbReference>
<dbReference type="EMBL" id="DP000009">
    <property type="protein sequence ID" value="ABF94849.1"/>
    <property type="molecule type" value="Genomic_DNA"/>
</dbReference>
<dbReference type="EMBL" id="AP008209">
    <property type="protein sequence ID" value="BAF11407.1"/>
    <property type="molecule type" value="Genomic_DNA"/>
</dbReference>
<dbReference type="EMBL" id="AP014959">
    <property type="protein sequence ID" value="BAS83157.1"/>
    <property type="molecule type" value="Genomic_DNA"/>
</dbReference>
<dbReference type="SMR" id="Q10PE7"/>
<dbReference type="FunCoup" id="Q10PE7">
    <property type="interactions" value="58"/>
</dbReference>
<dbReference type="STRING" id="39947.Q10PE7"/>
<dbReference type="PaxDb" id="39947-Q10PE7"/>
<dbReference type="EnsemblPlants" id="Os03t0237100-01">
    <property type="protein sequence ID" value="Os03t0237100-01"/>
    <property type="gene ID" value="Os03g0237100"/>
</dbReference>
<dbReference type="Gramene" id="Os03t0237100-01">
    <property type="protein sequence ID" value="Os03t0237100-01"/>
    <property type="gene ID" value="Os03g0237100"/>
</dbReference>
<dbReference type="KEGG" id="dosa:Os03g0237100"/>
<dbReference type="KEGG" id="osa:4332187"/>
<dbReference type="eggNOG" id="KOG1577">
    <property type="taxonomic scope" value="Eukaryota"/>
</dbReference>
<dbReference type="HOGENOM" id="CLU_023205_0_0_1"/>
<dbReference type="InParanoid" id="Q10PE7"/>
<dbReference type="OMA" id="LIYGNEH"/>
<dbReference type="OrthoDB" id="416253at2759"/>
<dbReference type="PlantReactome" id="R-OSA-9025754">
    <property type="pathway name" value="Mugineic acid biosynthesis"/>
</dbReference>
<dbReference type="Proteomes" id="UP000000763">
    <property type="component" value="Chromosome 3"/>
</dbReference>
<dbReference type="Proteomes" id="UP000059680">
    <property type="component" value="Chromosome 3"/>
</dbReference>
<dbReference type="GO" id="GO:0005829">
    <property type="term" value="C:cytosol"/>
    <property type="evidence" value="ECO:0000318"/>
    <property type="project" value="GO_Central"/>
</dbReference>
<dbReference type="GO" id="GO:0033707">
    <property type="term" value="F:3''-deamino-3''-oxonicotianamine reductase activity"/>
    <property type="evidence" value="ECO:0000314"/>
    <property type="project" value="UniProtKB"/>
</dbReference>
<dbReference type="GO" id="GO:0004032">
    <property type="term" value="F:aldose reductase (NADPH) activity"/>
    <property type="evidence" value="ECO:0000318"/>
    <property type="project" value="GO_Central"/>
</dbReference>
<dbReference type="GO" id="GO:0034224">
    <property type="term" value="P:cellular response to zinc ion starvation"/>
    <property type="evidence" value="ECO:0000270"/>
    <property type="project" value="UniProtKB"/>
</dbReference>
<dbReference type="GO" id="GO:1990641">
    <property type="term" value="P:response to iron ion starvation"/>
    <property type="evidence" value="ECO:0000270"/>
    <property type="project" value="UniProtKB"/>
</dbReference>
<dbReference type="GO" id="GO:0019290">
    <property type="term" value="P:siderophore biosynthetic process"/>
    <property type="evidence" value="ECO:0000314"/>
    <property type="project" value="UniProtKB"/>
</dbReference>
<dbReference type="CDD" id="cd19124">
    <property type="entry name" value="AKR_AKR4A_4B"/>
    <property type="match status" value="1"/>
</dbReference>
<dbReference type="FunFam" id="3.20.20.100:FF:000014">
    <property type="entry name" value="NAD(P)-linked oxidoreductase superfamily protein"/>
    <property type="match status" value="1"/>
</dbReference>
<dbReference type="Gene3D" id="3.20.20.100">
    <property type="entry name" value="NADP-dependent oxidoreductase domain"/>
    <property type="match status" value="1"/>
</dbReference>
<dbReference type="InterPro" id="IPR020471">
    <property type="entry name" value="AKR"/>
</dbReference>
<dbReference type="InterPro" id="IPR044497">
    <property type="entry name" value="AKR4A/B"/>
</dbReference>
<dbReference type="InterPro" id="IPR018170">
    <property type="entry name" value="Aldo/ket_reductase_CS"/>
</dbReference>
<dbReference type="InterPro" id="IPR023210">
    <property type="entry name" value="NADP_OxRdtase_dom"/>
</dbReference>
<dbReference type="InterPro" id="IPR036812">
    <property type="entry name" value="NADP_OxRdtase_dom_sf"/>
</dbReference>
<dbReference type="PANTHER" id="PTHR11732">
    <property type="entry name" value="ALDO/KETO REDUCTASE"/>
    <property type="match status" value="1"/>
</dbReference>
<dbReference type="Pfam" id="PF00248">
    <property type="entry name" value="Aldo_ket_red"/>
    <property type="match status" value="1"/>
</dbReference>
<dbReference type="PIRSF" id="PIRSF000097">
    <property type="entry name" value="AKR"/>
    <property type="match status" value="1"/>
</dbReference>
<dbReference type="PRINTS" id="PR00069">
    <property type="entry name" value="ALDKETRDTASE"/>
</dbReference>
<dbReference type="SUPFAM" id="SSF51430">
    <property type="entry name" value="NAD(P)-linked oxidoreductase"/>
    <property type="match status" value="1"/>
</dbReference>
<dbReference type="PROSITE" id="PS00798">
    <property type="entry name" value="ALDOKETO_REDUCTASE_1"/>
    <property type="match status" value="1"/>
</dbReference>
<dbReference type="PROSITE" id="PS00062">
    <property type="entry name" value="ALDOKETO_REDUCTASE_2"/>
    <property type="match status" value="1"/>
</dbReference>
<dbReference type="PROSITE" id="PS00063">
    <property type="entry name" value="ALDOKETO_REDUCTASE_3"/>
    <property type="match status" value="1"/>
</dbReference>
<sequence>MSDGGAGAKGAGFGMPRVGMGTAVQGPRPEPIRRAVLKAIEAGYRHFDTAAHYETEAPIGEAAAEAVRSGAIASRADLFITSKLWCSDAHRDRVLPALRQTLWNLQMEYVDLYLVHWPVSMKPGRYKAPFTADDFVPFDMRAVWEAMEECHRLGLAKAIGVCNFSCKKLDTLLSFATIPPAVNQVEVNPVWQQRKLRELCREKGVQICAYSPLGASGTHWGSDSVMASAVLRDIAQSKGKTVAQVCLRWVYEQGDCLIVKSFDEARMRENLDIVGWELTEEERQRIAGIPQRKINRALRFVSDHGPYKSLDDLWDGEI</sequence>
<comment type="function">
    <text evidence="3">Catalyzes the reduction of a 3''-keto intermediate during the biosynthesis of 2'-deoxymugineic acid (DMA) from L-Met. Involved in the formation of phytosiderophores (MAs) belonging to the mugineic acid family and required to acquire iron.</text>
</comment>
<comment type="catalytic activity">
    <reaction evidence="3">
        <text>2'-deoxymugineate + NAD(+) = 3''-deamino-3''-oxonicotianamine + NADH + H(+)</text>
        <dbReference type="Rhea" id="RHEA:16141"/>
        <dbReference type="ChEBI" id="CHEBI:15378"/>
        <dbReference type="ChEBI" id="CHEBI:57540"/>
        <dbReference type="ChEBI" id="CHEBI:57945"/>
        <dbReference type="ChEBI" id="CHEBI:58487"/>
        <dbReference type="ChEBI" id="CHEBI:58685"/>
        <dbReference type="EC" id="1.1.1.285"/>
    </reaction>
</comment>
<comment type="catalytic activity">
    <reaction evidence="3">
        <text>2'-deoxymugineate + NADP(+) = 3''-deamino-3''-oxonicotianamine + NADPH + H(+)</text>
        <dbReference type="Rhea" id="RHEA:16137"/>
        <dbReference type="ChEBI" id="CHEBI:15378"/>
        <dbReference type="ChEBI" id="CHEBI:57783"/>
        <dbReference type="ChEBI" id="CHEBI:58349"/>
        <dbReference type="ChEBI" id="CHEBI:58487"/>
        <dbReference type="ChEBI" id="CHEBI:58685"/>
        <dbReference type="EC" id="1.1.1.285"/>
    </reaction>
</comment>
<comment type="biophysicochemical properties">
    <phDependence>
        <text evidence="3">Optimum pH is 8-9.</text>
    </phDependence>
</comment>
<comment type="pathway">
    <text evidence="3">Siderophore biosynthesis.</text>
</comment>
<comment type="tissue specificity">
    <text evidence="3">Confined to cells participating in long distance transport (e.g. in the parts of pericycle cells adjacent to the protoxylem and metaxylem) in roots and to vascular bundles in shoots.</text>
</comment>
<comment type="developmental stage">
    <text evidence="4">Expressed in germinating seeds prior to protrusion of the radicle, especially in the vascular bundle of the seminal root 3 days after sowing.</text>
</comment>
<comment type="induction">
    <text evidence="3 5 6">Up-regulated under iron-deficient conditions in root and shoot tissues (PubMed:16926158, PubMed:18224446, PubMed:24887487). Slightly induced in shoots by zinc deficiency (PubMed:18224446).</text>
</comment>
<comment type="similarity">
    <text evidence="8">Belongs to the aldo/keto reductase family.</text>
</comment>
<comment type="sequence caution" evidence="8">
    <conflict type="erroneous gene model prediction">
        <sequence resource="EMBL-CDS" id="AAO06971"/>
    </conflict>
</comment>
<proteinExistence type="evidence at protein level"/>
<reference key="1">
    <citation type="journal article" date="2006" name="J. Biol. Chem.">
        <title>Cloning and characterization of deoxymugineic acid synthase genes from graminaceous plants.</title>
        <authorList>
            <person name="Bashir K."/>
            <person name="Inoue H."/>
            <person name="Nagasaka S."/>
            <person name="Takahashi M."/>
            <person name="Nakanishi H."/>
            <person name="Mori S."/>
            <person name="Nishizawa N.K."/>
        </authorList>
    </citation>
    <scope>NUCLEOTIDE SEQUENCE [MRNA]</scope>
    <scope>FUNCTION</scope>
    <scope>PATHWAY</scope>
    <scope>CATALYTIC ACTIVITY</scope>
    <scope>BIOPHYSICOCHEMICAL PROPERTIES</scope>
    <scope>INDUCTION BY IRON-DEFICIENCY</scope>
    <scope>TISSUE SPECIFICITY</scope>
    <source>
        <strain>cv. Nipponbare</strain>
    </source>
</reference>
<reference key="2">
    <citation type="journal article" date="2006" name="Plant Signal. Behav.">
        <title>Deoxymugineic Acid synthase: a gene important for fe-acquisition and homeostasis.</title>
        <authorList>
            <person name="Bashir K."/>
            <person name="Nishizawa N.K."/>
        </authorList>
    </citation>
    <scope>REVIEW</scope>
</reference>
<reference key="3">
    <citation type="journal article" date="2005" name="Genome Res.">
        <title>Sequence, annotation, and analysis of synteny between rice chromosome 3 and diverged grass species.</title>
        <authorList>
            <consortium name="The rice chromosome 3 sequencing consortium"/>
            <person name="Buell C.R."/>
            <person name="Yuan Q."/>
            <person name="Ouyang S."/>
            <person name="Liu J."/>
            <person name="Zhu W."/>
            <person name="Wang A."/>
            <person name="Maiti R."/>
            <person name="Haas B."/>
            <person name="Wortman J."/>
            <person name="Pertea M."/>
            <person name="Jones K.M."/>
            <person name="Kim M."/>
            <person name="Overton L."/>
            <person name="Tsitrin T."/>
            <person name="Fadrosh D."/>
            <person name="Bera J."/>
            <person name="Weaver B."/>
            <person name="Jin S."/>
            <person name="Johri S."/>
            <person name="Reardon M."/>
            <person name="Webb K."/>
            <person name="Hill J."/>
            <person name="Moffat K."/>
            <person name="Tallon L."/>
            <person name="Van Aken S."/>
            <person name="Lewis M."/>
            <person name="Utterback T."/>
            <person name="Feldblyum T."/>
            <person name="Zismann V."/>
            <person name="Iobst S."/>
            <person name="Hsiao J."/>
            <person name="de Vazeille A.R."/>
            <person name="Salzberg S.L."/>
            <person name="White O."/>
            <person name="Fraser C.M."/>
            <person name="Yu Y."/>
            <person name="Kim H."/>
            <person name="Rambo T."/>
            <person name="Currie J."/>
            <person name="Collura K."/>
            <person name="Kernodle-Thompson S."/>
            <person name="Wei F."/>
            <person name="Kudrna K."/>
            <person name="Ammiraju J.S.S."/>
            <person name="Luo M."/>
            <person name="Goicoechea J.L."/>
            <person name="Wing R.A."/>
            <person name="Henry D."/>
            <person name="Oates R."/>
            <person name="Palmer M."/>
            <person name="Pries G."/>
            <person name="Saski C."/>
            <person name="Simmons J."/>
            <person name="Soderlund C."/>
            <person name="Nelson W."/>
            <person name="de la Bastide M."/>
            <person name="Spiegel L."/>
            <person name="Nascimento L."/>
            <person name="Huang E."/>
            <person name="Preston R."/>
            <person name="Zutavern T."/>
            <person name="Palmer L."/>
            <person name="O'Shaughnessy A."/>
            <person name="Dike S."/>
            <person name="McCombie W.R."/>
            <person name="Minx P."/>
            <person name="Cordum H."/>
            <person name="Wilson R."/>
            <person name="Jin W."/>
            <person name="Lee H.R."/>
            <person name="Jiang J."/>
            <person name="Jackson S."/>
        </authorList>
    </citation>
    <scope>NUCLEOTIDE SEQUENCE [LARGE SCALE GENOMIC DNA]</scope>
    <source>
        <strain>cv. Nipponbare</strain>
    </source>
</reference>
<reference key="4">
    <citation type="journal article" date="2005" name="Nature">
        <title>The map-based sequence of the rice genome.</title>
        <authorList>
            <consortium name="International rice genome sequencing project (IRGSP)"/>
        </authorList>
    </citation>
    <scope>NUCLEOTIDE SEQUENCE [LARGE SCALE GENOMIC DNA]</scope>
    <source>
        <strain>cv. Nipponbare</strain>
    </source>
</reference>
<reference key="5">
    <citation type="journal article" date="2008" name="Nucleic Acids Res.">
        <title>The rice annotation project database (RAP-DB): 2008 update.</title>
        <authorList>
            <consortium name="The rice annotation project (RAP)"/>
        </authorList>
    </citation>
    <scope>GENOME REANNOTATION</scope>
    <source>
        <strain>cv. Nipponbare</strain>
    </source>
</reference>
<reference key="6">
    <citation type="journal article" date="2013" name="Rice">
        <title>Improvement of the Oryza sativa Nipponbare reference genome using next generation sequence and optical map data.</title>
        <authorList>
            <person name="Kawahara Y."/>
            <person name="de la Bastide M."/>
            <person name="Hamilton J.P."/>
            <person name="Kanamori H."/>
            <person name="McCombie W.R."/>
            <person name="Ouyang S."/>
            <person name="Schwartz D.C."/>
            <person name="Tanaka T."/>
            <person name="Wu J."/>
            <person name="Zhou S."/>
            <person name="Childs K.L."/>
            <person name="Davidson R.M."/>
            <person name="Lin H."/>
            <person name="Quesada-Ocampo L."/>
            <person name="Vaillancourt B."/>
            <person name="Sakai H."/>
            <person name="Lee S.S."/>
            <person name="Kim J."/>
            <person name="Numa H."/>
            <person name="Itoh T."/>
            <person name="Buell C.R."/>
            <person name="Matsumoto T."/>
        </authorList>
    </citation>
    <scope>GENOME REANNOTATION</scope>
    <source>
        <strain>cv. Nipponbare</strain>
    </source>
</reference>
<reference key="7">
    <citation type="journal article" date="2007" name="Plant Mol. Biol.">
        <title>The expression of iron homeostasis-related genes during rice germination.</title>
        <authorList>
            <person name="Nozoye T."/>
            <person name="Inoue H."/>
            <person name="Takahashi M."/>
            <person name="Ishimaru Y."/>
            <person name="Nakanishi H."/>
            <person name="Mori S."/>
            <person name="Nishizawa N.K."/>
        </authorList>
    </citation>
    <scope>DEVELOPMENTAL STAGE</scope>
    <source>
        <strain>cv. Nipponbare</strain>
        <strain>cv. Tsukinohikari</strain>
    </source>
</reference>
<reference key="8">
    <citation type="journal article" date="2008" name="Plant Mol. Biol.">
        <title>Deoxymugineic acid increases Zn translocation in Zn-deficient rice plants.</title>
        <authorList>
            <person name="Suzuki M."/>
            <person name="Tsukamoto T."/>
            <person name="Inoue H."/>
            <person name="Watanabe S."/>
            <person name="Matsuhashi S."/>
            <person name="Takahashi M."/>
            <person name="Nakanishi H."/>
            <person name="Mori S."/>
            <person name="Nishizawa N.K."/>
        </authorList>
    </citation>
    <scope>INDUCTION BY IRON-DEFICIENCY AND ZINC-DEFICIENCY</scope>
</reference>
<reference key="9">
    <citation type="journal article" date="2014" name="Gene">
        <title>Expression patterns of QTL based and other candidate genes in Madhukar x Swarna RILs with contrasting levels of iron and zinc in unpolished rice grains.</title>
        <authorList>
            <person name="Agarwal S."/>
            <person name="Tripura Venkata V.G."/>
            <person name="Kotla A."/>
            <person name="Mangrauthia S.K."/>
            <person name="Neelamraju S."/>
        </authorList>
    </citation>
    <scope>INDUCTION BY IRON-DEFICIENCY</scope>
</reference>
<reference key="10">
    <citation type="journal article" date="2014" name="Rice">
        <title>Iron deficiency responses in rice roots.</title>
        <authorList>
            <person name="Kobayashi T."/>
            <person name="Nakanishi Itai R."/>
            <person name="Nishizawa N.K."/>
        </authorList>
    </citation>
    <scope>REVIEW ON RESPONSES TO IRON-DEFICIENCY</scope>
</reference>
<accession>Q10PE7</accession>
<accession>Q0PCF5</accession>
<accession>Q8H011</accession>
<name>DMAS1_ORYSJ</name>
<gene>
    <name evidence="7" type="primary">DMAS1</name>
    <name evidence="10" type="ordered locus">LOC_Os03g13390</name>
    <name evidence="11" type="ordered locus">Os03g0237100</name>
    <name evidence="9" type="ORF">OJ1081D05.5</name>
</gene>
<feature type="chain" id="PRO_0000442299" description="Deoxymugineic acid synthase 1">
    <location>
        <begin position="1"/>
        <end position="318"/>
    </location>
</feature>
<feature type="active site" description="Proton donor" evidence="2">
    <location>
        <position position="53"/>
    </location>
</feature>
<feature type="binding site" evidence="1">
    <location>
        <position position="48"/>
    </location>
    <ligand>
        <name>NADP(+)</name>
        <dbReference type="ChEBI" id="CHEBI:58349"/>
    </ligand>
</feature>
<feature type="binding site" evidence="2">
    <location>
        <position position="116"/>
    </location>
    <ligand>
        <name>substrate</name>
    </ligand>
</feature>
<feature type="binding site" evidence="1">
    <location>
        <begin position="162"/>
        <end position="163"/>
    </location>
    <ligand>
        <name>NADP(+)</name>
        <dbReference type="ChEBI" id="CHEBI:58349"/>
    </ligand>
</feature>
<feature type="binding site" evidence="1">
    <location>
        <position position="184"/>
    </location>
    <ligand>
        <name>NADP(+)</name>
        <dbReference type="ChEBI" id="CHEBI:58349"/>
    </ligand>
</feature>
<feature type="binding site" evidence="1">
    <location>
        <begin position="262"/>
        <end position="270"/>
    </location>
    <ligand>
        <name>NADP(+)</name>
        <dbReference type="ChEBI" id="CHEBI:58349"/>
    </ligand>
</feature>
<feature type="binding site" evidence="2">
    <location>
        <begin position="277"/>
        <end position="285"/>
    </location>
    <ligand>
        <name>NADP(+)</name>
        <dbReference type="ChEBI" id="CHEBI:58349"/>
    </ligand>
</feature>
<feature type="sequence conflict" description="In Ref. 1; BAF03161." evidence="8" ref="1">
    <original>L</original>
    <variation>P</variation>
    <location>
        <position position="78"/>
    </location>
</feature>
<organism>
    <name type="scientific">Oryza sativa subsp. japonica</name>
    <name type="common">Rice</name>
    <dbReference type="NCBI Taxonomy" id="39947"/>
    <lineage>
        <taxon>Eukaryota</taxon>
        <taxon>Viridiplantae</taxon>
        <taxon>Streptophyta</taxon>
        <taxon>Embryophyta</taxon>
        <taxon>Tracheophyta</taxon>
        <taxon>Spermatophyta</taxon>
        <taxon>Magnoliopsida</taxon>
        <taxon>Liliopsida</taxon>
        <taxon>Poales</taxon>
        <taxon>Poaceae</taxon>
        <taxon>BOP clade</taxon>
        <taxon>Oryzoideae</taxon>
        <taxon>Oryzeae</taxon>
        <taxon>Oryzinae</taxon>
        <taxon>Oryza</taxon>
        <taxon>Oryza sativa</taxon>
    </lineage>
</organism>